<sequence length="473" mass="51635">MTSLPGRGVSPSSSDPLCEGNAAPSSSSSGQDLKQSKNSILSCVFSSPFSIFEAHQDSSAHRPLKPHSGSYAWSRFLRRIACTGSMWRFLGASKALTSSDVWFLGKCYKLSSEELSNSSDCESGNAAFLEDFSSRIWITYRKGFDAISDSKYTSDVNWGCMVRSSQMLVAQALIFHHLGRSWRKPSQKPYSPEYIGILHMFGDSEACAFSIHNLLQAGKSYGLAAGSWVGPYAMCRAWQTLVRTNREHHEAVDGNGNFPMALYVVSGDEDGERGGAPVVCIDVAAQLCCDFNKGQSTWSPILLLVPLVLGLDKLNPRYIPLLKETFTFPQSLGILGGKPGTSTYVAGVQDDRVLYLDPHEVQLAVDIAADNLEADTSSYHCSTVRDLALDLIDPSLAIGFYCRDKDDFDDFCSRASELVDKANGAPLFTVMQSVQPSKQMYNEESSSGDGMDIINVEGLDGSGETGEEEWQIL</sequence>
<comment type="function">
    <text evidence="1 3">Cysteine protease that plays a key role in autophagy by mediating both proteolytic activation and delipidation of ATG8 family proteins. The protease activity is required for proteolytic activation of ATG8 family proteins: cleaves the C-terminal amino acid of ATG8 proteins to reveal a C-terminal glycine (By similarity). Exposure of the glycine at the C-terminus is essential for ATG8 proteins conjugation to phosphatidylethanolamine (PE) and insertion to membranes, which is necessary for autophagy. In addition to the protease activity, also mediates delipidation of PE-conjugated ATG8 proteins (By similarity).</text>
</comment>
<comment type="catalytic activity">
    <reaction evidence="3">
        <text>[protein]-C-terminal L-amino acid-glycyl-phosphatidylethanolamide + H2O = [protein]-C-terminal L-amino acid-glycine + a 1,2-diacyl-sn-glycero-3-phosphoethanolamine</text>
        <dbReference type="Rhea" id="RHEA:67548"/>
        <dbReference type="Rhea" id="RHEA-COMP:17323"/>
        <dbReference type="Rhea" id="RHEA-COMP:17324"/>
        <dbReference type="ChEBI" id="CHEBI:15377"/>
        <dbReference type="ChEBI" id="CHEBI:64612"/>
        <dbReference type="ChEBI" id="CHEBI:172940"/>
        <dbReference type="ChEBI" id="CHEBI:172941"/>
    </reaction>
    <physiologicalReaction direction="left-to-right" evidence="3">
        <dbReference type="Rhea" id="RHEA:67549"/>
    </physiologicalReaction>
</comment>
<comment type="subunit">
    <text evidence="1">Interacts with ATG8.</text>
</comment>
<comment type="subcellular location">
    <subcellularLocation>
        <location evidence="2">Cytoplasm</location>
    </subcellularLocation>
</comment>
<comment type="similarity">
    <text evidence="5">Belongs to the peptidase C54 family.</text>
</comment>
<organism>
    <name type="scientific">Oryza sativa subsp. indica</name>
    <name type="common">Rice</name>
    <dbReference type="NCBI Taxonomy" id="39946"/>
    <lineage>
        <taxon>Eukaryota</taxon>
        <taxon>Viridiplantae</taxon>
        <taxon>Streptophyta</taxon>
        <taxon>Embryophyta</taxon>
        <taxon>Tracheophyta</taxon>
        <taxon>Spermatophyta</taxon>
        <taxon>Magnoliopsida</taxon>
        <taxon>Liliopsida</taxon>
        <taxon>Poales</taxon>
        <taxon>Poaceae</taxon>
        <taxon>BOP clade</taxon>
        <taxon>Oryzoideae</taxon>
        <taxon>Oryzeae</taxon>
        <taxon>Oryzinae</taxon>
        <taxon>Oryza</taxon>
        <taxon>Oryza sativa</taxon>
    </lineage>
</organism>
<feature type="chain" id="PRO_0000286901" description="Cysteine protease ATG4A">
    <location>
        <begin position="1"/>
        <end position="473"/>
    </location>
</feature>
<feature type="region of interest" description="Disordered" evidence="4">
    <location>
        <begin position="1"/>
        <end position="33"/>
    </location>
</feature>
<feature type="active site" description="Nucleophile" evidence="3">
    <location>
        <position position="160"/>
    </location>
</feature>
<feature type="active site" evidence="3">
    <location>
        <position position="357"/>
    </location>
</feature>
<feature type="active site" evidence="3">
    <location>
        <position position="359"/>
    </location>
</feature>
<keyword id="KW-0072">Autophagy</keyword>
<keyword id="KW-0963">Cytoplasm</keyword>
<keyword id="KW-0378">Hydrolase</keyword>
<keyword id="KW-0645">Protease</keyword>
<keyword id="KW-0653">Protein transport</keyword>
<keyword id="KW-1185">Reference proteome</keyword>
<keyword id="KW-0788">Thiol protease</keyword>
<keyword id="KW-0813">Transport</keyword>
<keyword id="KW-0833">Ubl conjugation pathway</keyword>
<gene>
    <name type="primary">ATG4A</name>
    <name type="synonym">APG4A</name>
    <name type="ORF">OsI_011538</name>
</gene>
<protein>
    <recommendedName>
        <fullName evidence="5">Cysteine protease ATG4A</fullName>
        <ecNumber evidence="3">3.4.22.-</ecNumber>
    </recommendedName>
    <alternativeName>
        <fullName>Autophagy-related protein 4 homolog A</fullName>
    </alternativeName>
</protein>
<reference key="1">
    <citation type="journal article" date="2005" name="PLoS Biol.">
        <title>The genomes of Oryza sativa: a history of duplications.</title>
        <authorList>
            <person name="Yu J."/>
            <person name="Wang J."/>
            <person name="Lin W."/>
            <person name="Li S."/>
            <person name="Li H."/>
            <person name="Zhou J."/>
            <person name="Ni P."/>
            <person name="Dong W."/>
            <person name="Hu S."/>
            <person name="Zeng C."/>
            <person name="Zhang J."/>
            <person name="Zhang Y."/>
            <person name="Li R."/>
            <person name="Xu Z."/>
            <person name="Li S."/>
            <person name="Li X."/>
            <person name="Zheng H."/>
            <person name="Cong L."/>
            <person name="Lin L."/>
            <person name="Yin J."/>
            <person name="Geng J."/>
            <person name="Li G."/>
            <person name="Shi J."/>
            <person name="Liu J."/>
            <person name="Lv H."/>
            <person name="Li J."/>
            <person name="Wang J."/>
            <person name="Deng Y."/>
            <person name="Ran L."/>
            <person name="Shi X."/>
            <person name="Wang X."/>
            <person name="Wu Q."/>
            <person name="Li C."/>
            <person name="Ren X."/>
            <person name="Wang J."/>
            <person name="Wang X."/>
            <person name="Li D."/>
            <person name="Liu D."/>
            <person name="Zhang X."/>
            <person name="Ji Z."/>
            <person name="Zhao W."/>
            <person name="Sun Y."/>
            <person name="Zhang Z."/>
            <person name="Bao J."/>
            <person name="Han Y."/>
            <person name="Dong L."/>
            <person name="Ji J."/>
            <person name="Chen P."/>
            <person name="Wu S."/>
            <person name="Liu J."/>
            <person name="Xiao Y."/>
            <person name="Bu D."/>
            <person name="Tan J."/>
            <person name="Yang L."/>
            <person name="Ye C."/>
            <person name="Zhang J."/>
            <person name="Xu J."/>
            <person name="Zhou Y."/>
            <person name="Yu Y."/>
            <person name="Zhang B."/>
            <person name="Zhuang S."/>
            <person name="Wei H."/>
            <person name="Liu B."/>
            <person name="Lei M."/>
            <person name="Yu H."/>
            <person name="Li Y."/>
            <person name="Xu H."/>
            <person name="Wei S."/>
            <person name="He X."/>
            <person name="Fang L."/>
            <person name="Zhang Z."/>
            <person name="Zhang Y."/>
            <person name="Huang X."/>
            <person name="Su Z."/>
            <person name="Tong W."/>
            <person name="Li J."/>
            <person name="Tong Z."/>
            <person name="Li S."/>
            <person name="Ye J."/>
            <person name="Wang L."/>
            <person name="Fang L."/>
            <person name="Lei T."/>
            <person name="Chen C.-S."/>
            <person name="Chen H.-C."/>
            <person name="Xu Z."/>
            <person name="Li H."/>
            <person name="Huang H."/>
            <person name="Zhang F."/>
            <person name="Xu H."/>
            <person name="Li N."/>
            <person name="Zhao C."/>
            <person name="Li S."/>
            <person name="Dong L."/>
            <person name="Huang Y."/>
            <person name="Li L."/>
            <person name="Xi Y."/>
            <person name="Qi Q."/>
            <person name="Li W."/>
            <person name="Zhang B."/>
            <person name="Hu W."/>
            <person name="Zhang Y."/>
            <person name="Tian X."/>
            <person name="Jiao Y."/>
            <person name="Liang X."/>
            <person name="Jin J."/>
            <person name="Gao L."/>
            <person name="Zheng W."/>
            <person name="Hao B."/>
            <person name="Liu S.-M."/>
            <person name="Wang W."/>
            <person name="Yuan L."/>
            <person name="Cao M."/>
            <person name="McDermott J."/>
            <person name="Samudrala R."/>
            <person name="Wang J."/>
            <person name="Wong G.K.-S."/>
            <person name="Yang H."/>
        </authorList>
    </citation>
    <scope>NUCLEOTIDE SEQUENCE [LARGE SCALE GENOMIC DNA]</scope>
    <source>
        <strain>cv. 93-11</strain>
    </source>
</reference>
<dbReference type="EC" id="3.4.22.-" evidence="3"/>
<dbReference type="EMBL" id="CM000128">
    <property type="protein sequence ID" value="EAY90305.1"/>
    <property type="molecule type" value="Genomic_DNA"/>
</dbReference>
<dbReference type="SMR" id="A2XHJ5"/>
<dbReference type="STRING" id="39946.A2XHJ5"/>
<dbReference type="EnsemblPlants" id="BGIOSGA012791-TA">
    <property type="protein sequence ID" value="BGIOSGA012791-PA"/>
    <property type="gene ID" value="BGIOSGA012791"/>
</dbReference>
<dbReference type="EnsemblPlants" id="OsGoSa_03g0020200.02">
    <property type="protein sequence ID" value="OsGoSa_03g0020200.02"/>
    <property type="gene ID" value="OsGoSa_03g0020200"/>
</dbReference>
<dbReference type="EnsemblPlants" id="OsIR64_03g0019880.02">
    <property type="protein sequence ID" value="OsIR64_03g0019880.02"/>
    <property type="gene ID" value="OsIR64_03g0019880"/>
</dbReference>
<dbReference type="EnsemblPlants" id="OsKYG_03g0020110.02">
    <property type="protein sequence ID" value="OsKYG_03g0020110.02"/>
    <property type="gene ID" value="OsKYG_03g0020110"/>
</dbReference>
<dbReference type="EnsemblPlants" id="OsLaMu_03g0019940.03">
    <property type="protein sequence ID" value="OsLaMu_03g0019940.03"/>
    <property type="gene ID" value="OsLaMu_03g0019940"/>
</dbReference>
<dbReference type="EnsemblPlants" id="OsLima_03g0020090.02">
    <property type="protein sequence ID" value="OsLima_03g0020090.02"/>
    <property type="gene ID" value="OsLima_03g0020090"/>
</dbReference>
<dbReference type="EnsemblPlants" id="OsLiXu_03g0020070.03">
    <property type="protein sequence ID" value="OsLiXu_03g0020070.03"/>
    <property type="gene ID" value="OsLiXu_03g0020070"/>
</dbReference>
<dbReference type="EnsemblPlants" id="OsMH63_03G020120_02">
    <property type="protein sequence ID" value="OsMH63_03G020120_02"/>
    <property type="gene ID" value="OsMH63_03G020120"/>
</dbReference>
<dbReference type="EnsemblPlants" id="OsPr106_03g0020100.03">
    <property type="protein sequence ID" value="OsPr106_03g0020100.03"/>
    <property type="gene ID" value="OsPr106_03g0020100"/>
</dbReference>
<dbReference type="EnsemblPlants" id="OsZS97_03G020000_02">
    <property type="protein sequence ID" value="OsZS97_03G020000_02"/>
    <property type="gene ID" value="OsZS97_03G020000"/>
</dbReference>
<dbReference type="EnsemblPlants" id="OsZS97_03G020000_03">
    <property type="protein sequence ID" value="OsZS97_03G020000_03"/>
    <property type="gene ID" value="OsZS97_03G020000"/>
</dbReference>
<dbReference type="Gramene" id="BGIOSGA012791-TA">
    <property type="protein sequence ID" value="BGIOSGA012791-PA"/>
    <property type="gene ID" value="BGIOSGA012791"/>
</dbReference>
<dbReference type="Gramene" id="OsGoSa_03g0020200.02">
    <property type="protein sequence ID" value="OsGoSa_03g0020200.02"/>
    <property type="gene ID" value="OsGoSa_03g0020200"/>
</dbReference>
<dbReference type="Gramene" id="OsIR64_03g0019880.02">
    <property type="protein sequence ID" value="OsIR64_03g0019880.02"/>
    <property type="gene ID" value="OsIR64_03g0019880"/>
</dbReference>
<dbReference type="Gramene" id="OsKYG_03g0020110.02">
    <property type="protein sequence ID" value="OsKYG_03g0020110.02"/>
    <property type="gene ID" value="OsKYG_03g0020110"/>
</dbReference>
<dbReference type="Gramene" id="OsLaMu_03g0019940.03">
    <property type="protein sequence ID" value="OsLaMu_03g0019940.03"/>
    <property type="gene ID" value="OsLaMu_03g0019940"/>
</dbReference>
<dbReference type="Gramene" id="OsLima_03g0020090.02">
    <property type="protein sequence ID" value="OsLima_03g0020090.02"/>
    <property type="gene ID" value="OsLima_03g0020090"/>
</dbReference>
<dbReference type="Gramene" id="OsLiXu_03g0020070.03">
    <property type="protein sequence ID" value="OsLiXu_03g0020070.03"/>
    <property type="gene ID" value="OsLiXu_03g0020070"/>
</dbReference>
<dbReference type="Gramene" id="OsMH63_03G020120_02">
    <property type="protein sequence ID" value="OsMH63_03G020120_02"/>
    <property type="gene ID" value="OsMH63_03G020120"/>
</dbReference>
<dbReference type="Gramene" id="OsPr106_03g0020100.03">
    <property type="protein sequence ID" value="OsPr106_03g0020100.03"/>
    <property type="gene ID" value="OsPr106_03g0020100"/>
</dbReference>
<dbReference type="Gramene" id="OsZS97_03G020000_02">
    <property type="protein sequence ID" value="OsZS97_03G020000_02"/>
    <property type="gene ID" value="OsZS97_03G020000"/>
</dbReference>
<dbReference type="Gramene" id="OsZS97_03G020000_03">
    <property type="protein sequence ID" value="OsZS97_03G020000_03"/>
    <property type="gene ID" value="OsZS97_03G020000"/>
</dbReference>
<dbReference type="HOGENOM" id="CLU_021259_1_0_1"/>
<dbReference type="OMA" id="PDETFHC"/>
<dbReference type="OrthoDB" id="2960936at2759"/>
<dbReference type="Proteomes" id="UP000007015">
    <property type="component" value="Chromosome 3"/>
</dbReference>
<dbReference type="GO" id="GO:0005737">
    <property type="term" value="C:cytoplasm"/>
    <property type="evidence" value="ECO:0007669"/>
    <property type="project" value="UniProtKB-SubCell"/>
</dbReference>
<dbReference type="GO" id="GO:0004197">
    <property type="term" value="F:cysteine-type endopeptidase activity"/>
    <property type="evidence" value="ECO:0007669"/>
    <property type="project" value="TreeGrafter"/>
</dbReference>
<dbReference type="GO" id="GO:0019786">
    <property type="term" value="F:protein-phosphatidylethanolamide deconjugating activity"/>
    <property type="evidence" value="ECO:0007669"/>
    <property type="project" value="InterPro"/>
</dbReference>
<dbReference type="GO" id="GO:0035973">
    <property type="term" value="P:aggrephagy"/>
    <property type="evidence" value="ECO:0007669"/>
    <property type="project" value="TreeGrafter"/>
</dbReference>
<dbReference type="GO" id="GO:0000045">
    <property type="term" value="P:autophagosome assembly"/>
    <property type="evidence" value="ECO:0007669"/>
    <property type="project" value="TreeGrafter"/>
</dbReference>
<dbReference type="GO" id="GO:0000423">
    <property type="term" value="P:mitophagy"/>
    <property type="evidence" value="ECO:0007669"/>
    <property type="project" value="TreeGrafter"/>
</dbReference>
<dbReference type="GO" id="GO:0034727">
    <property type="term" value="P:piecemeal microautophagy of the nucleus"/>
    <property type="evidence" value="ECO:0007669"/>
    <property type="project" value="TreeGrafter"/>
</dbReference>
<dbReference type="GO" id="GO:0016485">
    <property type="term" value="P:protein processing"/>
    <property type="evidence" value="ECO:0007669"/>
    <property type="project" value="TreeGrafter"/>
</dbReference>
<dbReference type="GO" id="GO:0015031">
    <property type="term" value="P:protein transport"/>
    <property type="evidence" value="ECO:0007669"/>
    <property type="project" value="UniProtKB-KW"/>
</dbReference>
<dbReference type="InterPro" id="IPR038765">
    <property type="entry name" value="Papain-like_cys_pep_sf"/>
</dbReference>
<dbReference type="InterPro" id="IPR005078">
    <property type="entry name" value="Peptidase_C54"/>
</dbReference>
<dbReference type="InterPro" id="IPR046792">
    <property type="entry name" value="Peptidase_C54_cat"/>
</dbReference>
<dbReference type="PANTHER" id="PTHR22624:SF49">
    <property type="entry name" value="CYSTEINE PROTEASE"/>
    <property type="match status" value="1"/>
</dbReference>
<dbReference type="PANTHER" id="PTHR22624">
    <property type="entry name" value="CYSTEINE PROTEASE ATG4"/>
    <property type="match status" value="1"/>
</dbReference>
<dbReference type="Pfam" id="PF03416">
    <property type="entry name" value="Peptidase_C54"/>
    <property type="match status" value="1"/>
</dbReference>
<dbReference type="SUPFAM" id="SSF54001">
    <property type="entry name" value="Cysteine proteinases"/>
    <property type="match status" value="1"/>
</dbReference>
<proteinExistence type="inferred from homology"/>
<name>ATG4A_ORYSI</name>
<accession>A2XHJ5</accession>
<evidence type="ECO:0000250" key="1">
    <source>
        <dbReference type="UniProtKB" id="Q2XPP4"/>
    </source>
</evidence>
<evidence type="ECO:0000250" key="2">
    <source>
        <dbReference type="UniProtKB" id="Q8BGE6"/>
    </source>
</evidence>
<evidence type="ECO:0000250" key="3">
    <source>
        <dbReference type="UniProtKB" id="Q9Y4P1"/>
    </source>
</evidence>
<evidence type="ECO:0000256" key="4">
    <source>
        <dbReference type="SAM" id="MobiDB-lite"/>
    </source>
</evidence>
<evidence type="ECO:0000305" key="5"/>